<protein>
    <recommendedName>
        <fullName evidence="1">6-phosphogluconolactonase</fullName>
        <shortName evidence="1">6-P-gluconolactonase</shortName>
        <ecNumber evidence="1">3.1.1.31</ecNumber>
    </recommendedName>
</protein>
<reference key="1">
    <citation type="journal article" date="2003" name="Proc. Natl. Acad. Sci. U.S.A.">
        <title>The genome sequence of Blochmannia floridanus: comparative analysis of reduced genomes.</title>
        <authorList>
            <person name="Gil R."/>
            <person name="Silva F.J."/>
            <person name="Zientz E."/>
            <person name="Delmotte F."/>
            <person name="Gonzalez-Candelas F."/>
            <person name="Latorre A."/>
            <person name="Rausell C."/>
            <person name="Kamerbeek J."/>
            <person name="Gadau J."/>
            <person name="Hoelldobler B."/>
            <person name="van Ham R.C.H.J."/>
            <person name="Gross R."/>
            <person name="Moya A."/>
        </authorList>
    </citation>
    <scope>NUCLEOTIDE SEQUENCE [LARGE SCALE GENOMIC DNA]</scope>
</reference>
<dbReference type="EC" id="3.1.1.31" evidence="1"/>
<dbReference type="EMBL" id="BX248583">
    <property type="protein sequence ID" value="CAD83408.1"/>
    <property type="molecule type" value="Genomic_DNA"/>
</dbReference>
<dbReference type="SMR" id="Q7VR81"/>
<dbReference type="STRING" id="203907.Bfl341"/>
<dbReference type="KEGG" id="bfl:Bfl341"/>
<dbReference type="eggNOG" id="COG2706">
    <property type="taxonomic scope" value="Bacteria"/>
</dbReference>
<dbReference type="HOGENOM" id="CLU_038716_2_0_6"/>
<dbReference type="OrthoDB" id="9790815at2"/>
<dbReference type="UniPathway" id="UPA00115">
    <property type="reaction ID" value="UER00409"/>
</dbReference>
<dbReference type="Proteomes" id="UP000002192">
    <property type="component" value="Chromosome"/>
</dbReference>
<dbReference type="GO" id="GO:0005829">
    <property type="term" value="C:cytosol"/>
    <property type="evidence" value="ECO:0007669"/>
    <property type="project" value="TreeGrafter"/>
</dbReference>
<dbReference type="GO" id="GO:0017057">
    <property type="term" value="F:6-phosphogluconolactonase activity"/>
    <property type="evidence" value="ECO:0007669"/>
    <property type="project" value="UniProtKB-UniRule"/>
</dbReference>
<dbReference type="GO" id="GO:0006006">
    <property type="term" value="P:glucose metabolic process"/>
    <property type="evidence" value="ECO:0007669"/>
    <property type="project" value="UniProtKB-KW"/>
</dbReference>
<dbReference type="GO" id="GO:0009051">
    <property type="term" value="P:pentose-phosphate shunt, oxidative branch"/>
    <property type="evidence" value="ECO:0007669"/>
    <property type="project" value="UniProtKB-UniRule"/>
</dbReference>
<dbReference type="Gene3D" id="2.130.10.10">
    <property type="entry name" value="YVTN repeat-like/Quinoprotein amine dehydrogenase"/>
    <property type="match status" value="1"/>
</dbReference>
<dbReference type="HAMAP" id="MF_01605">
    <property type="entry name" value="6P_gluconolactonase"/>
    <property type="match status" value="1"/>
</dbReference>
<dbReference type="InterPro" id="IPR022528">
    <property type="entry name" value="6-phosphogluconolactonase_YbhE"/>
</dbReference>
<dbReference type="InterPro" id="IPR050282">
    <property type="entry name" value="Cycloisomerase_2"/>
</dbReference>
<dbReference type="InterPro" id="IPR019405">
    <property type="entry name" value="Lactonase_7-beta_prop"/>
</dbReference>
<dbReference type="InterPro" id="IPR011045">
    <property type="entry name" value="N2O_reductase_N"/>
</dbReference>
<dbReference type="InterPro" id="IPR015943">
    <property type="entry name" value="WD40/YVTN_repeat-like_dom_sf"/>
</dbReference>
<dbReference type="NCBIfam" id="NF008258">
    <property type="entry name" value="PRK11028.1"/>
    <property type="match status" value="1"/>
</dbReference>
<dbReference type="PANTHER" id="PTHR30344:SF1">
    <property type="entry name" value="6-PHOSPHOGLUCONOLACTONASE"/>
    <property type="match status" value="1"/>
</dbReference>
<dbReference type="PANTHER" id="PTHR30344">
    <property type="entry name" value="6-PHOSPHOGLUCONOLACTONASE-RELATED"/>
    <property type="match status" value="1"/>
</dbReference>
<dbReference type="Pfam" id="PF10282">
    <property type="entry name" value="Lactonase"/>
    <property type="match status" value="1"/>
</dbReference>
<dbReference type="SUPFAM" id="SSF50974">
    <property type="entry name" value="Nitrous oxide reductase, N-terminal domain"/>
    <property type="match status" value="1"/>
</dbReference>
<name>6PGL_BLOFL</name>
<proteinExistence type="inferred from homology"/>
<keyword id="KW-0119">Carbohydrate metabolism</keyword>
<keyword id="KW-0313">Glucose metabolism</keyword>
<keyword id="KW-0378">Hydrolase</keyword>
<keyword id="KW-1185">Reference proteome</keyword>
<comment type="function">
    <text evidence="1">Catalyzes the hydrolysis of 6-phosphogluconolactone to 6-phosphogluconate.</text>
</comment>
<comment type="catalytic activity">
    <reaction evidence="1">
        <text>6-phospho-D-glucono-1,5-lactone + H2O = 6-phospho-D-gluconate + H(+)</text>
        <dbReference type="Rhea" id="RHEA:12556"/>
        <dbReference type="ChEBI" id="CHEBI:15377"/>
        <dbReference type="ChEBI" id="CHEBI:15378"/>
        <dbReference type="ChEBI" id="CHEBI:57955"/>
        <dbReference type="ChEBI" id="CHEBI:58759"/>
        <dbReference type="EC" id="3.1.1.31"/>
    </reaction>
</comment>
<comment type="pathway">
    <text evidence="1">Carbohydrate degradation; pentose phosphate pathway; D-ribulose 5-phosphate from D-glucose 6-phosphate (oxidative stage): step 2/3.</text>
</comment>
<comment type="similarity">
    <text evidence="1">Belongs to the cycloisomerase 2 family.</text>
</comment>
<sequence>MQIFYISSPDNQKIYVWKLDNHQEKLELMQVVSTDGCAQPTVVHPNQNFLYVGIRPDFKIDTYRISQNGLLTKIQSTKICDSPTYLTINIYGTFIYCVSYNFNCINVIKIDKFGLLCNSIQIIKNMLGCHSANINKDRKVLWAPCLQENTIRLFDIDHLYGTLKPHNPHVINTNMQSGPRHMAFHSTDNYAYVINEYNGVIDVIQYNDSITNLAIIQKINILSNHGLDTKKFWSSDIHITPNNRWLYCADRFCNTISLFEILLNTKKLKFINYIYTEDQPRGFLIDSTGNFLIVAGQKSHFITLYRIHANNGNLSVISRHASGMGPMWISILSKNTIH</sequence>
<accession>Q7VR81</accession>
<evidence type="ECO:0000255" key="1">
    <source>
        <dbReference type="HAMAP-Rule" id="MF_01605"/>
    </source>
</evidence>
<organism>
    <name type="scientific">Blochmanniella floridana</name>
    <dbReference type="NCBI Taxonomy" id="203907"/>
    <lineage>
        <taxon>Bacteria</taxon>
        <taxon>Pseudomonadati</taxon>
        <taxon>Pseudomonadota</taxon>
        <taxon>Gammaproteobacteria</taxon>
        <taxon>Enterobacterales</taxon>
        <taxon>Enterobacteriaceae</taxon>
        <taxon>ant endosymbionts</taxon>
        <taxon>Candidatus Blochmanniella</taxon>
    </lineage>
</organism>
<feature type="chain" id="PRO_0000171131" description="6-phosphogluconolactonase">
    <location>
        <begin position="1"/>
        <end position="338"/>
    </location>
</feature>
<gene>
    <name evidence="1" type="primary">pgl</name>
    <name type="ordered locus">Bfl341</name>
</gene>